<dbReference type="EC" id="3.1.1.61" evidence="1"/>
<dbReference type="EC" id="3.5.1.44" evidence="1"/>
<dbReference type="EMBL" id="BX936398">
    <property type="protein sequence ID" value="CAH21636.1"/>
    <property type="molecule type" value="Genomic_DNA"/>
</dbReference>
<dbReference type="RefSeq" id="WP_011192566.1">
    <property type="nucleotide sequence ID" value="NC_006155.1"/>
</dbReference>
<dbReference type="SMR" id="Q669T5"/>
<dbReference type="KEGG" id="ypo:BZ17_54"/>
<dbReference type="KEGG" id="yps:YPTB2398"/>
<dbReference type="PATRIC" id="fig|273123.14.peg.57"/>
<dbReference type="Proteomes" id="UP000001011">
    <property type="component" value="Chromosome"/>
</dbReference>
<dbReference type="GO" id="GO:0005737">
    <property type="term" value="C:cytoplasm"/>
    <property type="evidence" value="ECO:0007669"/>
    <property type="project" value="UniProtKB-SubCell"/>
</dbReference>
<dbReference type="GO" id="GO:0000156">
    <property type="term" value="F:phosphorelay response regulator activity"/>
    <property type="evidence" value="ECO:0007669"/>
    <property type="project" value="InterPro"/>
</dbReference>
<dbReference type="GO" id="GO:0008984">
    <property type="term" value="F:protein-glutamate methylesterase activity"/>
    <property type="evidence" value="ECO:0007669"/>
    <property type="project" value="UniProtKB-UniRule"/>
</dbReference>
<dbReference type="GO" id="GO:0050568">
    <property type="term" value="F:protein-glutamine glutaminase activity"/>
    <property type="evidence" value="ECO:0007669"/>
    <property type="project" value="UniProtKB-UniRule"/>
</dbReference>
<dbReference type="GO" id="GO:0006935">
    <property type="term" value="P:chemotaxis"/>
    <property type="evidence" value="ECO:0007669"/>
    <property type="project" value="UniProtKB-UniRule"/>
</dbReference>
<dbReference type="CDD" id="cd16432">
    <property type="entry name" value="CheB_Rec"/>
    <property type="match status" value="1"/>
</dbReference>
<dbReference type="CDD" id="cd17541">
    <property type="entry name" value="REC_CheB-like"/>
    <property type="match status" value="1"/>
</dbReference>
<dbReference type="FunFam" id="3.40.50.180:FF:000001">
    <property type="entry name" value="Protein-glutamate methylesterase/protein-glutamine glutaminase"/>
    <property type="match status" value="1"/>
</dbReference>
<dbReference type="FunFam" id="3.40.50.2300:FF:000060">
    <property type="entry name" value="Protein-glutamate methylesterase/protein-glutamine glutaminase"/>
    <property type="match status" value="1"/>
</dbReference>
<dbReference type="Gene3D" id="3.40.50.2300">
    <property type="match status" value="1"/>
</dbReference>
<dbReference type="Gene3D" id="3.40.50.180">
    <property type="entry name" value="Methylesterase CheB, C-terminal domain"/>
    <property type="match status" value="1"/>
</dbReference>
<dbReference type="HAMAP" id="MF_00099">
    <property type="entry name" value="CheB_chemtxs"/>
    <property type="match status" value="1"/>
</dbReference>
<dbReference type="InterPro" id="IPR008248">
    <property type="entry name" value="CheB-like"/>
</dbReference>
<dbReference type="InterPro" id="IPR035909">
    <property type="entry name" value="CheB_C"/>
</dbReference>
<dbReference type="InterPro" id="IPR011006">
    <property type="entry name" value="CheY-like_superfamily"/>
</dbReference>
<dbReference type="InterPro" id="IPR000673">
    <property type="entry name" value="Sig_transdc_resp-reg_Me-estase"/>
</dbReference>
<dbReference type="InterPro" id="IPR001789">
    <property type="entry name" value="Sig_transdc_resp-reg_receiver"/>
</dbReference>
<dbReference type="NCBIfam" id="NF001965">
    <property type="entry name" value="PRK00742.1"/>
    <property type="match status" value="1"/>
</dbReference>
<dbReference type="NCBIfam" id="NF009206">
    <property type="entry name" value="PRK12555.1"/>
    <property type="match status" value="1"/>
</dbReference>
<dbReference type="PANTHER" id="PTHR42872">
    <property type="entry name" value="PROTEIN-GLUTAMATE METHYLESTERASE/PROTEIN-GLUTAMINE GLUTAMINASE"/>
    <property type="match status" value="1"/>
</dbReference>
<dbReference type="PANTHER" id="PTHR42872:SF6">
    <property type="entry name" value="PROTEIN-GLUTAMATE METHYLESTERASE_PROTEIN-GLUTAMINE GLUTAMINASE"/>
    <property type="match status" value="1"/>
</dbReference>
<dbReference type="Pfam" id="PF01339">
    <property type="entry name" value="CheB_methylest"/>
    <property type="match status" value="1"/>
</dbReference>
<dbReference type="Pfam" id="PF00072">
    <property type="entry name" value="Response_reg"/>
    <property type="match status" value="1"/>
</dbReference>
<dbReference type="PIRSF" id="PIRSF000876">
    <property type="entry name" value="RR_chemtxs_CheB"/>
    <property type="match status" value="1"/>
</dbReference>
<dbReference type="SMART" id="SM00448">
    <property type="entry name" value="REC"/>
    <property type="match status" value="1"/>
</dbReference>
<dbReference type="SUPFAM" id="SSF52172">
    <property type="entry name" value="CheY-like"/>
    <property type="match status" value="1"/>
</dbReference>
<dbReference type="SUPFAM" id="SSF52738">
    <property type="entry name" value="Methylesterase CheB, C-terminal domain"/>
    <property type="match status" value="1"/>
</dbReference>
<dbReference type="PROSITE" id="PS50122">
    <property type="entry name" value="CHEB"/>
    <property type="match status" value="1"/>
</dbReference>
<dbReference type="PROSITE" id="PS50110">
    <property type="entry name" value="RESPONSE_REGULATORY"/>
    <property type="match status" value="1"/>
</dbReference>
<feature type="chain" id="PRO_0000225496" description="Protein-glutamate methylesterase/protein-glutamine glutaminase">
    <location>
        <begin position="1"/>
        <end position="349"/>
    </location>
</feature>
<feature type="domain" description="Response regulatory" evidence="1">
    <location>
        <begin position="5"/>
        <end position="122"/>
    </location>
</feature>
<feature type="domain" description="CheB-type methylesterase" evidence="1">
    <location>
        <begin position="152"/>
        <end position="344"/>
    </location>
</feature>
<feature type="active site" evidence="1">
    <location>
        <position position="164"/>
    </location>
</feature>
<feature type="active site" evidence="1">
    <location>
        <position position="190"/>
    </location>
</feature>
<feature type="active site" evidence="1">
    <location>
        <position position="286"/>
    </location>
</feature>
<feature type="modified residue" description="4-aspartylphosphate" evidence="1">
    <location>
        <position position="56"/>
    </location>
</feature>
<name>CHEB_YERPS</name>
<protein>
    <recommendedName>
        <fullName evidence="1">Protein-glutamate methylesterase/protein-glutamine glutaminase</fullName>
        <ecNumber evidence="1">3.1.1.61</ecNumber>
        <ecNumber evidence="1">3.5.1.44</ecNumber>
    </recommendedName>
</protein>
<accession>Q669T5</accession>
<organism>
    <name type="scientific">Yersinia pseudotuberculosis serotype I (strain IP32953)</name>
    <dbReference type="NCBI Taxonomy" id="273123"/>
    <lineage>
        <taxon>Bacteria</taxon>
        <taxon>Pseudomonadati</taxon>
        <taxon>Pseudomonadota</taxon>
        <taxon>Gammaproteobacteria</taxon>
        <taxon>Enterobacterales</taxon>
        <taxon>Yersiniaceae</taxon>
        <taxon>Yersinia</taxon>
    </lineage>
</organism>
<keyword id="KW-0145">Chemotaxis</keyword>
<keyword id="KW-0963">Cytoplasm</keyword>
<keyword id="KW-0378">Hydrolase</keyword>
<keyword id="KW-0597">Phosphoprotein</keyword>
<comment type="function">
    <text evidence="1">Involved in chemotaxis. Part of a chemotaxis signal transduction system that modulates chemotaxis in response to various stimuli. Catalyzes the demethylation of specific methylglutamate residues introduced into the chemoreceptors (methyl-accepting chemotaxis proteins or MCP) by CheR. Also mediates the irreversible deamidation of specific glutamine residues to glutamic acid.</text>
</comment>
<comment type="catalytic activity">
    <reaction evidence="1">
        <text>[protein]-L-glutamate 5-O-methyl ester + H2O = L-glutamyl-[protein] + methanol + H(+)</text>
        <dbReference type="Rhea" id="RHEA:23236"/>
        <dbReference type="Rhea" id="RHEA-COMP:10208"/>
        <dbReference type="Rhea" id="RHEA-COMP:10311"/>
        <dbReference type="ChEBI" id="CHEBI:15377"/>
        <dbReference type="ChEBI" id="CHEBI:15378"/>
        <dbReference type="ChEBI" id="CHEBI:17790"/>
        <dbReference type="ChEBI" id="CHEBI:29973"/>
        <dbReference type="ChEBI" id="CHEBI:82795"/>
        <dbReference type="EC" id="3.1.1.61"/>
    </reaction>
</comment>
<comment type="catalytic activity">
    <reaction evidence="1">
        <text>L-glutaminyl-[protein] + H2O = L-glutamyl-[protein] + NH4(+)</text>
        <dbReference type="Rhea" id="RHEA:16441"/>
        <dbReference type="Rhea" id="RHEA-COMP:10207"/>
        <dbReference type="Rhea" id="RHEA-COMP:10208"/>
        <dbReference type="ChEBI" id="CHEBI:15377"/>
        <dbReference type="ChEBI" id="CHEBI:28938"/>
        <dbReference type="ChEBI" id="CHEBI:29973"/>
        <dbReference type="ChEBI" id="CHEBI:30011"/>
        <dbReference type="EC" id="3.5.1.44"/>
    </reaction>
</comment>
<comment type="subcellular location">
    <subcellularLocation>
        <location evidence="1">Cytoplasm</location>
    </subcellularLocation>
</comment>
<comment type="domain">
    <text evidence="1">Contains a C-terminal catalytic domain, and an N-terminal region which modulates catalytic activity.</text>
</comment>
<comment type="PTM">
    <text evidence="1">Phosphorylated by CheA. Phosphorylation of the N-terminal regulatory domain activates the methylesterase activity.</text>
</comment>
<comment type="similarity">
    <text evidence="1">Belongs to the CheB family.</text>
</comment>
<proteinExistence type="inferred from homology"/>
<reference key="1">
    <citation type="journal article" date="2004" name="Proc. Natl. Acad. Sci. U.S.A.">
        <title>Insights into the evolution of Yersinia pestis through whole-genome comparison with Yersinia pseudotuberculosis.</title>
        <authorList>
            <person name="Chain P.S.G."/>
            <person name="Carniel E."/>
            <person name="Larimer F.W."/>
            <person name="Lamerdin J."/>
            <person name="Stoutland P.O."/>
            <person name="Regala W.M."/>
            <person name="Georgescu A.M."/>
            <person name="Vergez L.M."/>
            <person name="Land M.L."/>
            <person name="Motin V.L."/>
            <person name="Brubaker R.R."/>
            <person name="Fowler J."/>
            <person name="Hinnebusch J."/>
            <person name="Marceau M."/>
            <person name="Medigue C."/>
            <person name="Simonet M."/>
            <person name="Chenal-Francisque V."/>
            <person name="Souza B."/>
            <person name="Dacheux D."/>
            <person name="Elliott J.M."/>
            <person name="Derbise A."/>
            <person name="Hauser L.J."/>
            <person name="Garcia E."/>
        </authorList>
    </citation>
    <scope>NUCLEOTIDE SEQUENCE [LARGE SCALE GENOMIC DNA]</scope>
    <source>
        <strain>IP32953</strain>
    </source>
</reference>
<gene>
    <name evidence="1" type="primary">cheB</name>
    <name type="ordered locus">YPTB2398</name>
</gene>
<evidence type="ECO:0000255" key="1">
    <source>
        <dbReference type="HAMAP-Rule" id="MF_00099"/>
    </source>
</evidence>
<sequence length="349" mass="37968">MSKVRVLCVDDSALMRQLMTEIINSHPDMEMVAAAQDPLVARDLIKKFNPQVLTLDVEMPRMDGLDFLEKLMRLRPMPVVMVSSLTGKNSEITMRALELGAIDFVTKPQLGIREGMLAYSELIADKIRTAAKARLPQRVLENKPAMLSHTPLLSSEKLIAIGASTGGTEAIRAVLQPLPPTSPALLITQHMPPGFTRSFAERLNKLCQITVKEAEDGERVLPGHAYIAPGDRHLELARSGANYQVRIHDGPAVNRHRPSVDVLFRSVAQYAGRNAVGVILTGMGNDGAAGLLEMHRAGAYTLAQNEASCVVFGMPREAIAMGGVNDVVELNQISQRMLAQISSGQALRI</sequence>